<reference key="1">
    <citation type="journal article" date="2009" name="J. Bacteriol.">
        <title>Complete genome sequence of Rhodobacter sphaeroides KD131.</title>
        <authorList>
            <person name="Lim S.-K."/>
            <person name="Kim S.J."/>
            <person name="Cha S.H."/>
            <person name="Oh Y.-K."/>
            <person name="Rhee H.-J."/>
            <person name="Kim M.-S."/>
            <person name="Lee J.K."/>
        </authorList>
    </citation>
    <scope>NUCLEOTIDE SEQUENCE [LARGE SCALE GENOMIC DNA]</scope>
    <source>
        <strain>KD131 / KCTC 12085</strain>
    </source>
</reference>
<comment type="function">
    <text evidence="1">Could be a nuclease involved in processing of the 5'-end of pre-16S rRNA.</text>
</comment>
<comment type="subcellular location">
    <subcellularLocation>
        <location evidence="1">Cytoplasm</location>
    </subcellularLocation>
</comment>
<comment type="similarity">
    <text evidence="1">Belongs to the YqgF nuclease family.</text>
</comment>
<keyword id="KW-0963">Cytoplasm</keyword>
<keyword id="KW-0378">Hydrolase</keyword>
<keyword id="KW-0540">Nuclease</keyword>
<keyword id="KW-0690">Ribosome biogenesis</keyword>
<proteinExistence type="inferred from homology"/>
<sequence>MIHDRIEDFLASLPRTGALAGLDLGTKTVGVAVSDGLRRIATPLLTVRRTKFTEDAAKLKAIADERRLVGIVLGLPRNMDGSEGPRAQSTRAFARNLVQVLPLPVGFWDERLSTVAAERALLEADTSRKRRAEVIDHVAAGYILQGVLDRLDWLGREGGA</sequence>
<feature type="chain" id="PRO_1000147489" description="Putative pre-16S rRNA nuclease">
    <location>
        <begin position="1"/>
        <end position="160"/>
    </location>
</feature>
<evidence type="ECO:0000255" key="1">
    <source>
        <dbReference type="HAMAP-Rule" id="MF_00651"/>
    </source>
</evidence>
<gene>
    <name type="ordered locus">RSKD131_0999</name>
</gene>
<name>YQGF_CERSK</name>
<dbReference type="EC" id="3.1.-.-" evidence="1"/>
<dbReference type="EMBL" id="CP001150">
    <property type="protein sequence ID" value="ACM00859.1"/>
    <property type="molecule type" value="Genomic_DNA"/>
</dbReference>
<dbReference type="RefSeq" id="WP_015920445.1">
    <property type="nucleotide sequence ID" value="NC_011963.1"/>
</dbReference>
<dbReference type="SMR" id="B9KRR7"/>
<dbReference type="GeneID" id="67446434"/>
<dbReference type="KEGG" id="rsk:RSKD131_0999"/>
<dbReference type="HOGENOM" id="CLU_098240_1_1_5"/>
<dbReference type="GO" id="GO:0005829">
    <property type="term" value="C:cytosol"/>
    <property type="evidence" value="ECO:0007669"/>
    <property type="project" value="TreeGrafter"/>
</dbReference>
<dbReference type="GO" id="GO:0004518">
    <property type="term" value="F:nuclease activity"/>
    <property type="evidence" value="ECO:0007669"/>
    <property type="project" value="UniProtKB-KW"/>
</dbReference>
<dbReference type="GO" id="GO:0000967">
    <property type="term" value="P:rRNA 5'-end processing"/>
    <property type="evidence" value="ECO:0007669"/>
    <property type="project" value="UniProtKB-UniRule"/>
</dbReference>
<dbReference type="CDD" id="cd16964">
    <property type="entry name" value="YqgF"/>
    <property type="match status" value="1"/>
</dbReference>
<dbReference type="Gene3D" id="3.30.420.140">
    <property type="entry name" value="YqgF/RNase H-like domain"/>
    <property type="match status" value="1"/>
</dbReference>
<dbReference type="HAMAP" id="MF_00651">
    <property type="entry name" value="Nuclease_YqgF"/>
    <property type="match status" value="1"/>
</dbReference>
<dbReference type="InterPro" id="IPR012337">
    <property type="entry name" value="RNaseH-like_sf"/>
</dbReference>
<dbReference type="InterPro" id="IPR005227">
    <property type="entry name" value="YqgF"/>
</dbReference>
<dbReference type="InterPro" id="IPR006641">
    <property type="entry name" value="YqgF/RNaseH-like_dom"/>
</dbReference>
<dbReference type="InterPro" id="IPR037027">
    <property type="entry name" value="YqgF/RNaseH-like_dom_sf"/>
</dbReference>
<dbReference type="NCBIfam" id="TIGR00250">
    <property type="entry name" value="RNAse_H_YqgF"/>
    <property type="match status" value="1"/>
</dbReference>
<dbReference type="PANTHER" id="PTHR33317">
    <property type="entry name" value="POLYNUCLEOTIDYL TRANSFERASE, RIBONUCLEASE H-LIKE SUPERFAMILY PROTEIN"/>
    <property type="match status" value="1"/>
</dbReference>
<dbReference type="PANTHER" id="PTHR33317:SF4">
    <property type="entry name" value="POLYNUCLEOTIDYL TRANSFERASE, RIBONUCLEASE H-LIKE SUPERFAMILY PROTEIN"/>
    <property type="match status" value="1"/>
</dbReference>
<dbReference type="Pfam" id="PF03652">
    <property type="entry name" value="RuvX"/>
    <property type="match status" value="1"/>
</dbReference>
<dbReference type="SMART" id="SM00732">
    <property type="entry name" value="YqgFc"/>
    <property type="match status" value="1"/>
</dbReference>
<dbReference type="SUPFAM" id="SSF53098">
    <property type="entry name" value="Ribonuclease H-like"/>
    <property type="match status" value="1"/>
</dbReference>
<organism>
    <name type="scientific">Cereibacter sphaeroides (strain KD131 / KCTC 12085)</name>
    <name type="common">Rhodobacter sphaeroides</name>
    <dbReference type="NCBI Taxonomy" id="557760"/>
    <lineage>
        <taxon>Bacteria</taxon>
        <taxon>Pseudomonadati</taxon>
        <taxon>Pseudomonadota</taxon>
        <taxon>Alphaproteobacteria</taxon>
        <taxon>Rhodobacterales</taxon>
        <taxon>Paracoccaceae</taxon>
        <taxon>Cereibacter</taxon>
    </lineage>
</organism>
<accession>B9KRR7</accession>
<protein>
    <recommendedName>
        <fullName evidence="1">Putative pre-16S rRNA nuclease</fullName>
        <ecNumber evidence="1">3.1.-.-</ecNumber>
    </recommendedName>
</protein>